<feature type="chain" id="PRO_0000197491" description="Glutathione synthetase">
    <location>
        <begin position="1"/>
        <end position="318"/>
    </location>
</feature>
<feature type="domain" description="ATP-grasp" evidence="2">
    <location>
        <begin position="124"/>
        <end position="310"/>
    </location>
</feature>
<feature type="binding site" evidence="2">
    <location>
        <begin position="150"/>
        <end position="207"/>
    </location>
    <ligand>
        <name>ATP</name>
        <dbReference type="ChEBI" id="CHEBI:30616"/>
    </ligand>
</feature>
<feature type="binding site" evidence="2">
    <location>
        <position position="281"/>
    </location>
    <ligand>
        <name>Mg(2+)</name>
        <dbReference type="ChEBI" id="CHEBI:18420"/>
    </ligand>
</feature>
<feature type="binding site" evidence="2">
    <location>
        <position position="283"/>
    </location>
    <ligand>
        <name>Mg(2+)</name>
        <dbReference type="ChEBI" id="CHEBI:18420"/>
    </ligand>
</feature>
<dbReference type="EC" id="6.3.2.3" evidence="2"/>
<dbReference type="EMBL" id="AE003852">
    <property type="protein sequence ID" value="AAF93641.1"/>
    <property type="molecule type" value="Genomic_DNA"/>
</dbReference>
<dbReference type="PIR" id="A82319">
    <property type="entry name" value="A82319"/>
</dbReference>
<dbReference type="RefSeq" id="NP_230122.1">
    <property type="nucleotide sequence ID" value="NC_002505.1"/>
</dbReference>
<dbReference type="RefSeq" id="WP_000593313.1">
    <property type="nucleotide sequence ID" value="NZ_LT906614.1"/>
</dbReference>
<dbReference type="SMR" id="Q9KUP7"/>
<dbReference type="STRING" id="243277.VC_0468"/>
<dbReference type="DNASU" id="2615130"/>
<dbReference type="EnsemblBacteria" id="AAF93641">
    <property type="protein sequence ID" value="AAF93641"/>
    <property type="gene ID" value="VC_0468"/>
</dbReference>
<dbReference type="GeneID" id="89515375"/>
<dbReference type="KEGG" id="vch:VC_0468"/>
<dbReference type="PATRIC" id="fig|243277.26.peg.441"/>
<dbReference type="eggNOG" id="COG0189">
    <property type="taxonomic scope" value="Bacteria"/>
</dbReference>
<dbReference type="HOGENOM" id="CLU_068239_0_0_6"/>
<dbReference type="UniPathway" id="UPA00142">
    <property type="reaction ID" value="UER00210"/>
</dbReference>
<dbReference type="Proteomes" id="UP000000584">
    <property type="component" value="Chromosome 1"/>
</dbReference>
<dbReference type="GO" id="GO:0005737">
    <property type="term" value="C:cytoplasm"/>
    <property type="evidence" value="ECO:0000318"/>
    <property type="project" value="GO_Central"/>
</dbReference>
<dbReference type="GO" id="GO:0005524">
    <property type="term" value="F:ATP binding"/>
    <property type="evidence" value="ECO:0007669"/>
    <property type="project" value="UniProtKB-UniRule"/>
</dbReference>
<dbReference type="GO" id="GO:0004363">
    <property type="term" value="F:glutathione synthase activity"/>
    <property type="evidence" value="ECO:0000318"/>
    <property type="project" value="GO_Central"/>
</dbReference>
<dbReference type="GO" id="GO:0046872">
    <property type="term" value="F:metal ion binding"/>
    <property type="evidence" value="ECO:0007669"/>
    <property type="project" value="UniProtKB-KW"/>
</dbReference>
<dbReference type="FunFam" id="3.30.1490.20:FF:000009">
    <property type="entry name" value="Glutathione synthetase"/>
    <property type="match status" value="1"/>
</dbReference>
<dbReference type="FunFam" id="3.30.470.20:FF:000010">
    <property type="entry name" value="Glutathione synthetase"/>
    <property type="match status" value="1"/>
</dbReference>
<dbReference type="FunFam" id="3.40.50.20:FF:000009">
    <property type="entry name" value="Glutathione synthetase"/>
    <property type="match status" value="1"/>
</dbReference>
<dbReference type="Gene3D" id="3.40.50.20">
    <property type="match status" value="1"/>
</dbReference>
<dbReference type="Gene3D" id="3.30.1490.20">
    <property type="entry name" value="ATP-grasp fold, A domain"/>
    <property type="match status" value="1"/>
</dbReference>
<dbReference type="Gene3D" id="3.30.470.20">
    <property type="entry name" value="ATP-grasp fold, B domain"/>
    <property type="match status" value="1"/>
</dbReference>
<dbReference type="HAMAP" id="MF_00162">
    <property type="entry name" value="GSH_S"/>
    <property type="match status" value="1"/>
</dbReference>
<dbReference type="InterPro" id="IPR011761">
    <property type="entry name" value="ATP-grasp"/>
</dbReference>
<dbReference type="InterPro" id="IPR013815">
    <property type="entry name" value="ATP_grasp_subdomain_1"/>
</dbReference>
<dbReference type="InterPro" id="IPR006284">
    <property type="entry name" value="Glut_synth_pro"/>
</dbReference>
<dbReference type="InterPro" id="IPR004218">
    <property type="entry name" value="GSHS_ATP-bd"/>
</dbReference>
<dbReference type="InterPro" id="IPR004215">
    <property type="entry name" value="GSHS_N"/>
</dbReference>
<dbReference type="InterPro" id="IPR016185">
    <property type="entry name" value="PreATP-grasp_dom_sf"/>
</dbReference>
<dbReference type="NCBIfam" id="TIGR01380">
    <property type="entry name" value="glut_syn"/>
    <property type="match status" value="1"/>
</dbReference>
<dbReference type="NCBIfam" id="NF003573">
    <property type="entry name" value="PRK05246.1"/>
    <property type="match status" value="1"/>
</dbReference>
<dbReference type="PANTHER" id="PTHR21621:SF4">
    <property type="entry name" value="GLUTATHIONE SYNTHETASE"/>
    <property type="match status" value="1"/>
</dbReference>
<dbReference type="PANTHER" id="PTHR21621">
    <property type="entry name" value="RIBOSOMAL PROTEIN S6 MODIFICATION PROTEIN"/>
    <property type="match status" value="1"/>
</dbReference>
<dbReference type="Pfam" id="PF02955">
    <property type="entry name" value="GSH-S_ATP"/>
    <property type="match status" value="1"/>
</dbReference>
<dbReference type="Pfam" id="PF02951">
    <property type="entry name" value="GSH-S_N"/>
    <property type="match status" value="1"/>
</dbReference>
<dbReference type="SUPFAM" id="SSF56059">
    <property type="entry name" value="Glutathione synthetase ATP-binding domain-like"/>
    <property type="match status" value="1"/>
</dbReference>
<dbReference type="SUPFAM" id="SSF52440">
    <property type="entry name" value="PreATP-grasp domain"/>
    <property type="match status" value="1"/>
</dbReference>
<dbReference type="PROSITE" id="PS50975">
    <property type="entry name" value="ATP_GRASP"/>
    <property type="match status" value="1"/>
</dbReference>
<keyword id="KW-0067">ATP-binding</keyword>
<keyword id="KW-0317">Glutathione biosynthesis</keyword>
<keyword id="KW-0436">Ligase</keyword>
<keyword id="KW-0460">Magnesium</keyword>
<keyword id="KW-0464">Manganese</keyword>
<keyword id="KW-0479">Metal-binding</keyword>
<keyword id="KW-0547">Nucleotide-binding</keyword>
<keyword id="KW-1185">Reference proteome</keyword>
<protein>
    <recommendedName>
        <fullName evidence="2">Glutathione synthetase</fullName>
        <ecNumber evidence="2">6.3.2.3</ecNumber>
    </recommendedName>
    <alternativeName>
        <fullName evidence="2">GSH synthetase</fullName>
        <shortName evidence="2">GSH-S</shortName>
        <shortName evidence="2">GSHase</shortName>
    </alternativeName>
    <alternativeName>
        <fullName evidence="2">Glutathione synthase</fullName>
    </alternativeName>
</protein>
<organism>
    <name type="scientific">Vibrio cholerae serotype O1 (strain ATCC 39315 / El Tor Inaba N16961)</name>
    <dbReference type="NCBI Taxonomy" id="243277"/>
    <lineage>
        <taxon>Bacteria</taxon>
        <taxon>Pseudomonadati</taxon>
        <taxon>Pseudomonadota</taxon>
        <taxon>Gammaproteobacteria</taxon>
        <taxon>Vibrionales</taxon>
        <taxon>Vibrionaceae</taxon>
        <taxon>Vibrio</taxon>
    </lineage>
</organism>
<comment type="catalytic activity">
    <reaction evidence="2">
        <text>gamma-L-glutamyl-L-cysteine + glycine + ATP = glutathione + ADP + phosphate + H(+)</text>
        <dbReference type="Rhea" id="RHEA:13557"/>
        <dbReference type="ChEBI" id="CHEBI:15378"/>
        <dbReference type="ChEBI" id="CHEBI:30616"/>
        <dbReference type="ChEBI" id="CHEBI:43474"/>
        <dbReference type="ChEBI" id="CHEBI:57305"/>
        <dbReference type="ChEBI" id="CHEBI:57925"/>
        <dbReference type="ChEBI" id="CHEBI:58173"/>
        <dbReference type="ChEBI" id="CHEBI:456216"/>
        <dbReference type="EC" id="6.3.2.3"/>
    </reaction>
</comment>
<comment type="cofactor">
    <cofactor evidence="1">
        <name>Mg(2+)</name>
        <dbReference type="ChEBI" id="CHEBI:18420"/>
    </cofactor>
    <cofactor evidence="1">
        <name>Mn(2+)</name>
        <dbReference type="ChEBI" id="CHEBI:29035"/>
    </cofactor>
    <text evidence="1">Binds 1 Mg(2+) or Mn(2+) ion per subunit.</text>
</comment>
<comment type="pathway">
    <text evidence="2">Sulfur metabolism; glutathione biosynthesis; glutathione from L-cysteine and L-glutamate: step 2/2.</text>
</comment>
<comment type="similarity">
    <text evidence="2">Belongs to the prokaryotic GSH synthase family.</text>
</comment>
<name>GSHB_VIBCH</name>
<gene>
    <name evidence="2" type="primary">gshB</name>
    <name type="ordered locus">VC_0468</name>
</gene>
<evidence type="ECO:0000250" key="1"/>
<evidence type="ECO:0000255" key="2">
    <source>
        <dbReference type="HAMAP-Rule" id="MF_00162"/>
    </source>
</evidence>
<proteinExistence type="inferred from homology"/>
<accession>Q9KUP7</accession>
<sequence length="318" mass="35408">MIKLGIVMDPIASINIKKDSSFAMMLEAQRRGYEIHYMEMNDLHLEQGVALADTKVVELKEDPSGWYQFKSEQTIALSELDAILMRKDPPFDTEYIYATYILERAEDEGVLVVNKPQSLRDCNEKLFTAWFPELTPITMVTRKAEKIKAFREQHGDVILKPLDGMGGASIFRVKEGDPNLSVIIETLTNHGQNYCMAQTFVPDISNGDKRILVVDGEPMPYCLARIPAKGETRGNLAAGGRGEPRPLSETDKKIALAVAPTLKEKGLLFVGLDVIGDKLTEINVTSPTCIREIEAAYDISITGKLMDAIERRLKATAM</sequence>
<reference key="1">
    <citation type="journal article" date="2000" name="Nature">
        <title>DNA sequence of both chromosomes of the cholera pathogen Vibrio cholerae.</title>
        <authorList>
            <person name="Heidelberg J.F."/>
            <person name="Eisen J.A."/>
            <person name="Nelson W.C."/>
            <person name="Clayton R.A."/>
            <person name="Gwinn M.L."/>
            <person name="Dodson R.J."/>
            <person name="Haft D.H."/>
            <person name="Hickey E.K."/>
            <person name="Peterson J.D."/>
            <person name="Umayam L.A."/>
            <person name="Gill S.R."/>
            <person name="Nelson K.E."/>
            <person name="Read T.D."/>
            <person name="Tettelin H."/>
            <person name="Richardson D.L."/>
            <person name="Ermolaeva M.D."/>
            <person name="Vamathevan J.J."/>
            <person name="Bass S."/>
            <person name="Qin H."/>
            <person name="Dragoi I."/>
            <person name="Sellers P."/>
            <person name="McDonald L.A."/>
            <person name="Utterback T.R."/>
            <person name="Fleischmann R.D."/>
            <person name="Nierman W.C."/>
            <person name="White O."/>
            <person name="Salzberg S.L."/>
            <person name="Smith H.O."/>
            <person name="Colwell R.R."/>
            <person name="Mekalanos J.J."/>
            <person name="Venter J.C."/>
            <person name="Fraser C.M."/>
        </authorList>
    </citation>
    <scope>NUCLEOTIDE SEQUENCE [LARGE SCALE GENOMIC DNA]</scope>
    <source>
        <strain>ATCC 39315 / El Tor Inaba N16961</strain>
    </source>
</reference>